<accession>P85604</accession>
<reference evidence="4" key="1">
    <citation type="journal article" date="2009" name="BMC Evol. Biol.">
        <title>A proteomic approach for studying insect phylogeny: CAPA peptides of ancient insect taxa (Dictyoptera, Blattoptera) as a test case.</title>
        <authorList>
            <person name="Roth S."/>
            <person name="Fromm B."/>
            <person name="Gaede G."/>
            <person name="Predel R."/>
        </authorList>
    </citation>
    <scope>PROTEIN SEQUENCE</scope>
    <scope>AMIDATION AT THR-11</scope>
    <source>
        <tissue evidence="2">Abdominal perisympathetic organs</tissue>
    </source>
</reference>
<dbReference type="GO" id="GO:0005576">
    <property type="term" value="C:extracellular region"/>
    <property type="evidence" value="ECO:0007669"/>
    <property type="project" value="UniProtKB-SubCell"/>
</dbReference>
<dbReference type="GO" id="GO:0007218">
    <property type="term" value="P:neuropeptide signaling pathway"/>
    <property type="evidence" value="ECO:0007669"/>
    <property type="project" value="UniProtKB-KW"/>
</dbReference>
<dbReference type="InterPro" id="IPR013231">
    <property type="entry name" value="Periviscerokinin"/>
</dbReference>
<dbReference type="Pfam" id="PF08259">
    <property type="entry name" value="Periviscerokin"/>
    <property type="match status" value="1"/>
</dbReference>
<keyword id="KW-0027">Amidation</keyword>
<keyword id="KW-0903">Direct protein sequencing</keyword>
<keyword id="KW-0527">Neuropeptide</keyword>
<keyword id="KW-0964">Secreted</keyword>
<protein>
    <recommendedName>
        <fullName evidence="3">Periviscerokinin-1</fullName>
        <shortName evidence="3">EllSp-PVK-1</shortName>
    </recommendedName>
</protein>
<feature type="peptide" id="PRO_0000378738" description="Periviscerokinin-1" evidence="2">
    <location>
        <begin position="1"/>
        <end position="11"/>
    </location>
</feature>
<feature type="modified residue" description="Threonine amide" evidence="2">
    <location>
        <position position="11"/>
    </location>
</feature>
<proteinExistence type="evidence at protein level"/>
<sequence length="11" mass="1091">GSSGLIPFGRT</sequence>
<organism>
    <name type="scientific">Elliptorhina sp. (strain SR-2005)</name>
    <name type="common">Hisser roach</name>
    <dbReference type="NCBI Taxonomy" id="348767"/>
    <lineage>
        <taxon>Eukaryota</taxon>
        <taxon>Metazoa</taxon>
        <taxon>Ecdysozoa</taxon>
        <taxon>Arthropoda</taxon>
        <taxon>Hexapoda</taxon>
        <taxon>Insecta</taxon>
        <taxon>Pterygota</taxon>
        <taxon>Neoptera</taxon>
        <taxon>Polyneoptera</taxon>
        <taxon>Dictyoptera</taxon>
        <taxon>Blattodea</taxon>
        <taxon>Blaberoidea</taxon>
        <taxon>Blaberidae</taxon>
        <taxon>Oxyhaloinae</taxon>
        <taxon>Elliptorhina</taxon>
    </lineage>
</organism>
<comment type="function">
    <text evidence="4">Mediates visceral muscle contractile activity (myotropic activity).</text>
</comment>
<comment type="subcellular location">
    <subcellularLocation>
        <location evidence="4">Secreted</location>
    </subcellularLocation>
</comment>
<comment type="similarity">
    <text evidence="1">Belongs to the periviscerokinin family.</text>
</comment>
<evidence type="ECO:0000255" key="1"/>
<evidence type="ECO:0000269" key="2">
    <source>
    </source>
</evidence>
<evidence type="ECO:0000303" key="3">
    <source>
    </source>
</evidence>
<evidence type="ECO:0000305" key="4"/>
<name>PVK1_ELLSS</name>